<protein>
    <recommendedName>
        <fullName>Mannitol 2-dehydrogenase</fullName>
        <shortName>M2DH</shortName>
        <shortName>MDH</shortName>
        <ecNumber>1.1.1.67</ecNumber>
    </recommendedName>
</protein>
<dbReference type="EC" id="1.1.1.67"/>
<dbReference type="EMBL" id="AACD01000050">
    <property type="protein sequence ID" value="EAA62921.1"/>
    <property type="status" value="ALT_SEQ"/>
    <property type="molecule type" value="Genomic_DNA"/>
</dbReference>
<dbReference type="EMBL" id="BN001306">
    <property type="protein sequence ID" value="CBF83955.1"/>
    <property type="molecule type" value="Genomic_DNA"/>
</dbReference>
<dbReference type="RefSeq" id="XP_660419.1">
    <property type="nucleotide sequence ID" value="XM_655327.1"/>
</dbReference>
<dbReference type="SMR" id="Q5B9G5"/>
<dbReference type="FunCoup" id="Q5B9G5">
    <property type="interactions" value="51"/>
</dbReference>
<dbReference type="STRING" id="227321.Q5B9G5"/>
<dbReference type="EnsemblFungi" id="CBF83955">
    <property type="protein sequence ID" value="CBF83955"/>
    <property type="gene ID" value="ANIA_02815"/>
</dbReference>
<dbReference type="VEuPathDB" id="FungiDB:AN2815"/>
<dbReference type="eggNOG" id="ENOG502QT30">
    <property type="taxonomic scope" value="Eukaryota"/>
</dbReference>
<dbReference type="HOGENOM" id="CLU_027324_0_1_1"/>
<dbReference type="InParanoid" id="Q5B9G5"/>
<dbReference type="OMA" id="IVASWAR"/>
<dbReference type="OrthoDB" id="418169at2759"/>
<dbReference type="Proteomes" id="UP000000560">
    <property type="component" value="Chromosome VI"/>
</dbReference>
<dbReference type="GO" id="GO:0050086">
    <property type="term" value="F:mannitol 2-dehydrogenase activity"/>
    <property type="evidence" value="ECO:0007669"/>
    <property type="project" value="UniProtKB-EC"/>
</dbReference>
<dbReference type="GO" id="GO:0046029">
    <property type="term" value="F:mannitol dehydrogenase activity"/>
    <property type="evidence" value="ECO:0000318"/>
    <property type="project" value="GO_Central"/>
</dbReference>
<dbReference type="FunFam" id="3.40.50.720:FF:000129">
    <property type="entry name" value="D-mannonate oxidoreductase"/>
    <property type="match status" value="1"/>
</dbReference>
<dbReference type="FunFam" id="1.10.1040.10:FF:000028">
    <property type="entry name" value="Mannitol 2-dehydrogenase"/>
    <property type="match status" value="1"/>
</dbReference>
<dbReference type="Gene3D" id="1.10.1040.10">
    <property type="entry name" value="N-(1-d-carboxylethyl)-l-norvaline Dehydrogenase, domain 2"/>
    <property type="match status" value="1"/>
</dbReference>
<dbReference type="Gene3D" id="3.40.50.720">
    <property type="entry name" value="NAD(P)-binding Rossmann-like Domain"/>
    <property type="match status" value="1"/>
</dbReference>
<dbReference type="InterPro" id="IPR008927">
    <property type="entry name" value="6-PGluconate_DH-like_C_sf"/>
</dbReference>
<dbReference type="InterPro" id="IPR013328">
    <property type="entry name" value="6PGD_dom2"/>
</dbReference>
<dbReference type="InterPro" id="IPR000669">
    <property type="entry name" value="Mannitol_DH"/>
</dbReference>
<dbReference type="InterPro" id="IPR050988">
    <property type="entry name" value="Mannitol_DH/Oxidoreductase"/>
</dbReference>
<dbReference type="InterPro" id="IPR013118">
    <property type="entry name" value="Mannitol_DH_C"/>
</dbReference>
<dbReference type="InterPro" id="IPR013131">
    <property type="entry name" value="Mannitol_DH_N"/>
</dbReference>
<dbReference type="InterPro" id="IPR036291">
    <property type="entry name" value="NAD(P)-bd_dom_sf"/>
</dbReference>
<dbReference type="PANTHER" id="PTHR43362:SF1">
    <property type="entry name" value="MANNITOL DEHYDROGENASE 2-RELATED"/>
    <property type="match status" value="1"/>
</dbReference>
<dbReference type="PANTHER" id="PTHR43362">
    <property type="entry name" value="MANNITOL DEHYDROGENASE DSF1-RELATED"/>
    <property type="match status" value="1"/>
</dbReference>
<dbReference type="Pfam" id="PF01232">
    <property type="entry name" value="Mannitol_dh"/>
    <property type="match status" value="1"/>
</dbReference>
<dbReference type="Pfam" id="PF08125">
    <property type="entry name" value="Mannitol_dh_C"/>
    <property type="match status" value="1"/>
</dbReference>
<dbReference type="PRINTS" id="PR00084">
    <property type="entry name" value="MTLDHDRGNASE"/>
</dbReference>
<dbReference type="SUPFAM" id="SSF48179">
    <property type="entry name" value="6-phosphogluconate dehydrogenase C-terminal domain-like"/>
    <property type="match status" value="1"/>
</dbReference>
<dbReference type="SUPFAM" id="SSF51735">
    <property type="entry name" value="NAD(P)-binding Rossmann-fold domains"/>
    <property type="match status" value="1"/>
</dbReference>
<comment type="function">
    <text evidence="1">Catalyzes the NAD(H)-dependent interconversion of D-fructose and D-mannitol in the mannitol metabolic pathway.</text>
</comment>
<comment type="catalytic activity">
    <reaction>
        <text>D-mannitol + NAD(+) = D-fructose + NADH + H(+)</text>
        <dbReference type="Rhea" id="RHEA:12084"/>
        <dbReference type="ChEBI" id="CHEBI:15378"/>
        <dbReference type="ChEBI" id="CHEBI:16899"/>
        <dbReference type="ChEBI" id="CHEBI:37721"/>
        <dbReference type="ChEBI" id="CHEBI:57540"/>
        <dbReference type="ChEBI" id="CHEBI:57945"/>
        <dbReference type="EC" id="1.1.1.67"/>
    </reaction>
</comment>
<comment type="subunit">
    <text evidence="1">Monomer.</text>
</comment>
<comment type="similarity">
    <text evidence="2">Belongs to the mannitol dehydrogenase family.</text>
</comment>
<comment type="sequence caution" evidence="2">
    <conflict type="erroneous gene model prediction">
        <sequence resource="EMBL-CDS" id="EAA62921"/>
    </conflict>
</comment>
<accession>Q5B9G5</accession>
<accession>C8VJH9</accession>
<feature type="chain" id="PRO_0000371544" description="Mannitol 2-dehydrogenase">
    <location>
        <begin position="1"/>
        <end position="502"/>
    </location>
</feature>
<feature type="binding site" evidence="1">
    <location>
        <begin position="37"/>
        <end position="48"/>
    </location>
    <ligand>
        <name>NAD(+)</name>
        <dbReference type="ChEBI" id="CHEBI:57540"/>
    </ligand>
</feature>
<proteinExistence type="inferred from homology"/>
<sequence length="502" mass="56583">MPPLKLNSKNLAAILNAGKGQIKVPTYPRNGAVKEGIVHIGVGGFHRAHLAVYIDRLMQNHGVTDYAIAGVGLTPFDKKMRDILRSQDHLYTVIERSAKGSFANVVGSINSFLFAPDDREAVVAKMAHPDTHIVSLTITESGYYYNENTHELVSEHPDIQFDLDPANEKTPRTTFGFLYAALARRFKQGLNPFTVMSCDNMQKNGAITRHMLESFARLRNPEIAEWISKKGHFPNAMVDRITPQTAPADITALANDFGIQDDWPVVTEPFMDWVIEDHFCDGRPPFEKVGVKVVKDLRAVEEYEKHKLRLLNGSHSAIGYAGQLAGFQYVHEVLQNDTYKKFLWQMMQEEVKPLLPEIPGVDIDEYCRTLIERFSNPTIKDQLPRICLNASGKIPQFIMPSIAEAIWVTGPFRRLCFVAAAWFRYLHGVDDAGNKFDIEDPMLEELQAKAKAGGLEPHEILSIKSLFGDDLRGDKRFLQEITTAMQLIDRDGVLKTMPKYVD</sequence>
<keyword id="KW-0520">NAD</keyword>
<keyword id="KW-0560">Oxidoreductase</keyword>
<keyword id="KW-1185">Reference proteome</keyword>
<organism>
    <name type="scientific">Emericella nidulans (strain FGSC A4 / ATCC 38163 / CBS 112.46 / NRRL 194 / M139)</name>
    <name type="common">Aspergillus nidulans</name>
    <dbReference type="NCBI Taxonomy" id="227321"/>
    <lineage>
        <taxon>Eukaryota</taxon>
        <taxon>Fungi</taxon>
        <taxon>Dikarya</taxon>
        <taxon>Ascomycota</taxon>
        <taxon>Pezizomycotina</taxon>
        <taxon>Eurotiomycetes</taxon>
        <taxon>Eurotiomycetidae</taxon>
        <taxon>Eurotiales</taxon>
        <taxon>Aspergillaceae</taxon>
        <taxon>Aspergillus</taxon>
        <taxon>Aspergillus subgen. Nidulantes</taxon>
    </lineage>
</organism>
<evidence type="ECO:0000250" key="1"/>
<evidence type="ECO:0000305" key="2"/>
<name>M2DH_EMENI</name>
<gene>
    <name type="ORF">AN2815</name>
</gene>
<reference key="1">
    <citation type="journal article" date="2005" name="Nature">
        <title>Sequencing of Aspergillus nidulans and comparative analysis with A. fumigatus and A. oryzae.</title>
        <authorList>
            <person name="Galagan J.E."/>
            <person name="Calvo S.E."/>
            <person name="Cuomo C."/>
            <person name="Ma L.-J."/>
            <person name="Wortman J.R."/>
            <person name="Batzoglou S."/>
            <person name="Lee S.-I."/>
            <person name="Bastuerkmen M."/>
            <person name="Spevak C.C."/>
            <person name="Clutterbuck J."/>
            <person name="Kapitonov V."/>
            <person name="Jurka J."/>
            <person name="Scazzocchio C."/>
            <person name="Farman M.L."/>
            <person name="Butler J."/>
            <person name="Purcell S."/>
            <person name="Harris S."/>
            <person name="Braus G.H."/>
            <person name="Draht O."/>
            <person name="Busch S."/>
            <person name="D'Enfert C."/>
            <person name="Bouchier C."/>
            <person name="Goldman G.H."/>
            <person name="Bell-Pedersen D."/>
            <person name="Griffiths-Jones S."/>
            <person name="Doonan J.H."/>
            <person name="Yu J."/>
            <person name="Vienken K."/>
            <person name="Pain A."/>
            <person name="Freitag M."/>
            <person name="Selker E.U."/>
            <person name="Archer D.B."/>
            <person name="Penalva M.A."/>
            <person name="Oakley B.R."/>
            <person name="Momany M."/>
            <person name="Tanaka T."/>
            <person name="Kumagai T."/>
            <person name="Asai K."/>
            <person name="Machida M."/>
            <person name="Nierman W.C."/>
            <person name="Denning D.W."/>
            <person name="Caddick M.X."/>
            <person name="Hynes M."/>
            <person name="Paoletti M."/>
            <person name="Fischer R."/>
            <person name="Miller B.L."/>
            <person name="Dyer P.S."/>
            <person name="Sachs M.S."/>
            <person name="Osmani S.A."/>
            <person name="Birren B.W."/>
        </authorList>
    </citation>
    <scope>NUCLEOTIDE SEQUENCE [LARGE SCALE GENOMIC DNA]</scope>
    <source>
        <strain>FGSC A4 / ATCC 38163 / CBS 112.46 / NRRL 194 / M139</strain>
    </source>
</reference>
<reference key="2">
    <citation type="journal article" date="2009" name="Fungal Genet. Biol.">
        <title>The 2008 update of the Aspergillus nidulans genome annotation: a community effort.</title>
        <authorList>
            <person name="Wortman J.R."/>
            <person name="Gilsenan J.M."/>
            <person name="Joardar V."/>
            <person name="Deegan J."/>
            <person name="Clutterbuck J."/>
            <person name="Andersen M.R."/>
            <person name="Archer D."/>
            <person name="Bencina M."/>
            <person name="Braus G."/>
            <person name="Coutinho P."/>
            <person name="von Dohren H."/>
            <person name="Doonan J."/>
            <person name="Driessen A.J."/>
            <person name="Durek P."/>
            <person name="Espeso E."/>
            <person name="Fekete E."/>
            <person name="Flipphi M."/>
            <person name="Estrada C.G."/>
            <person name="Geysens S."/>
            <person name="Goldman G."/>
            <person name="de Groot P.W."/>
            <person name="Hansen K."/>
            <person name="Harris S.D."/>
            <person name="Heinekamp T."/>
            <person name="Helmstaedt K."/>
            <person name="Henrissat B."/>
            <person name="Hofmann G."/>
            <person name="Homan T."/>
            <person name="Horio T."/>
            <person name="Horiuchi H."/>
            <person name="James S."/>
            <person name="Jones M."/>
            <person name="Karaffa L."/>
            <person name="Karanyi Z."/>
            <person name="Kato M."/>
            <person name="Keller N."/>
            <person name="Kelly D.E."/>
            <person name="Kiel J.A."/>
            <person name="Kim J.M."/>
            <person name="van der Klei I.J."/>
            <person name="Klis F.M."/>
            <person name="Kovalchuk A."/>
            <person name="Krasevec N."/>
            <person name="Kubicek C.P."/>
            <person name="Liu B."/>
            <person name="Maccabe A."/>
            <person name="Meyer V."/>
            <person name="Mirabito P."/>
            <person name="Miskei M."/>
            <person name="Mos M."/>
            <person name="Mullins J."/>
            <person name="Nelson D.R."/>
            <person name="Nielsen J."/>
            <person name="Oakley B.R."/>
            <person name="Osmani S.A."/>
            <person name="Pakula T."/>
            <person name="Paszewski A."/>
            <person name="Paulsen I."/>
            <person name="Pilsyk S."/>
            <person name="Pocsi I."/>
            <person name="Punt P.J."/>
            <person name="Ram A.F."/>
            <person name="Ren Q."/>
            <person name="Robellet X."/>
            <person name="Robson G."/>
            <person name="Seiboth B."/>
            <person name="van Solingen P."/>
            <person name="Specht T."/>
            <person name="Sun J."/>
            <person name="Taheri-Talesh N."/>
            <person name="Takeshita N."/>
            <person name="Ussery D."/>
            <person name="vanKuyk P.A."/>
            <person name="Visser H."/>
            <person name="van de Vondervoort P.J."/>
            <person name="de Vries R.P."/>
            <person name="Walton J."/>
            <person name="Xiang X."/>
            <person name="Xiong Y."/>
            <person name="Zeng A.P."/>
            <person name="Brandt B.W."/>
            <person name="Cornell M.J."/>
            <person name="van den Hondel C.A."/>
            <person name="Visser J."/>
            <person name="Oliver S.G."/>
            <person name="Turner G."/>
        </authorList>
    </citation>
    <scope>GENOME REANNOTATION</scope>
    <source>
        <strain>FGSC A4 / ATCC 38163 / CBS 112.46 / NRRL 194 / M139</strain>
    </source>
</reference>